<dbReference type="EMBL" id="CP000968">
    <property type="protein sequence ID" value="ACB08236.1"/>
    <property type="molecule type" value="Genomic_DNA"/>
</dbReference>
<dbReference type="RefSeq" id="WP_012310133.1">
    <property type="nucleotide sequence ID" value="NC_010482.1"/>
</dbReference>
<dbReference type="SMR" id="B1L707"/>
<dbReference type="FunCoup" id="B1L707">
    <property type="interactions" value="164"/>
</dbReference>
<dbReference type="STRING" id="374847.Kcr_1490"/>
<dbReference type="EnsemblBacteria" id="ACB08236">
    <property type="protein sequence ID" value="ACB08236"/>
    <property type="gene ID" value="Kcr_1490"/>
</dbReference>
<dbReference type="GeneID" id="6094767"/>
<dbReference type="KEGG" id="kcr:Kcr_1490"/>
<dbReference type="eggNOG" id="arCOG04067">
    <property type="taxonomic scope" value="Archaea"/>
</dbReference>
<dbReference type="HOGENOM" id="CLU_036235_0_1_2"/>
<dbReference type="InParanoid" id="B1L707"/>
<dbReference type="OrthoDB" id="5987at2157"/>
<dbReference type="PhylomeDB" id="B1L707"/>
<dbReference type="Proteomes" id="UP000001686">
    <property type="component" value="Chromosome"/>
</dbReference>
<dbReference type="GO" id="GO:0022625">
    <property type="term" value="C:cytosolic large ribosomal subunit"/>
    <property type="evidence" value="ECO:0000318"/>
    <property type="project" value="GO_Central"/>
</dbReference>
<dbReference type="GO" id="GO:0003723">
    <property type="term" value="F:RNA binding"/>
    <property type="evidence" value="ECO:0000318"/>
    <property type="project" value="GO_Central"/>
</dbReference>
<dbReference type="GO" id="GO:0019843">
    <property type="term" value="F:rRNA binding"/>
    <property type="evidence" value="ECO:0007669"/>
    <property type="project" value="UniProtKB-UniRule"/>
</dbReference>
<dbReference type="GO" id="GO:0003735">
    <property type="term" value="F:structural constituent of ribosome"/>
    <property type="evidence" value="ECO:0000318"/>
    <property type="project" value="GO_Central"/>
</dbReference>
<dbReference type="GO" id="GO:0002181">
    <property type="term" value="P:cytoplasmic translation"/>
    <property type="evidence" value="ECO:0000318"/>
    <property type="project" value="GO_Central"/>
</dbReference>
<dbReference type="FunFam" id="4.10.950.10:FF:000002">
    <property type="entry name" value="60S ribosomal protein L2"/>
    <property type="match status" value="1"/>
</dbReference>
<dbReference type="FunFam" id="2.30.30.30:FF:000006">
    <property type="entry name" value="60S ribosomal protein L8"/>
    <property type="match status" value="1"/>
</dbReference>
<dbReference type="Gene3D" id="2.30.30.30">
    <property type="match status" value="1"/>
</dbReference>
<dbReference type="Gene3D" id="2.40.50.140">
    <property type="entry name" value="Nucleic acid-binding proteins"/>
    <property type="match status" value="1"/>
</dbReference>
<dbReference type="Gene3D" id="4.10.950.10">
    <property type="entry name" value="Ribosomal protein L2, domain 3"/>
    <property type="match status" value="1"/>
</dbReference>
<dbReference type="HAMAP" id="MF_01320_A">
    <property type="entry name" value="Ribosomal_uL2_A"/>
    <property type="match status" value="1"/>
</dbReference>
<dbReference type="InterPro" id="IPR012340">
    <property type="entry name" value="NA-bd_OB-fold"/>
</dbReference>
<dbReference type="InterPro" id="IPR014722">
    <property type="entry name" value="Rib_uL2_dom2"/>
</dbReference>
<dbReference type="InterPro" id="IPR002171">
    <property type="entry name" value="Ribosomal_uL2"/>
</dbReference>
<dbReference type="InterPro" id="IPR023672">
    <property type="entry name" value="Ribosomal_uL2_arc_euk"/>
</dbReference>
<dbReference type="InterPro" id="IPR022669">
    <property type="entry name" value="Ribosomal_uL2_C"/>
</dbReference>
<dbReference type="InterPro" id="IPR014726">
    <property type="entry name" value="Ribosomal_uL2_dom3"/>
</dbReference>
<dbReference type="InterPro" id="IPR022666">
    <property type="entry name" value="Ribosomal_uL2_RNA-bd_dom"/>
</dbReference>
<dbReference type="InterPro" id="IPR008991">
    <property type="entry name" value="Translation_prot_SH3-like_sf"/>
</dbReference>
<dbReference type="NCBIfam" id="NF007180">
    <property type="entry name" value="PRK09612.1"/>
    <property type="match status" value="1"/>
</dbReference>
<dbReference type="PANTHER" id="PTHR13691:SF16">
    <property type="entry name" value="LARGE RIBOSOMAL SUBUNIT PROTEIN UL2"/>
    <property type="match status" value="1"/>
</dbReference>
<dbReference type="PANTHER" id="PTHR13691">
    <property type="entry name" value="RIBOSOMAL PROTEIN L2"/>
    <property type="match status" value="1"/>
</dbReference>
<dbReference type="Pfam" id="PF00181">
    <property type="entry name" value="Ribosomal_L2"/>
    <property type="match status" value="1"/>
</dbReference>
<dbReference type="Pfam" id="PF03947">
    <property type="entry name" value="Ribosomal_L2_C"/>
    <property type="match status" value="1"/>
</dbReference>
<dbReference type="PIRSF" id="PIRSF002158">
    <property type="entry name" value="Ribosomal_L2"/>
    <property type="match status" value="1"/>
</dbReference>
<dbReference type="SMART" id="SM01383">
    <property type="entry name" value="Ribosomal_L2"/>
    <property type="match status" value="1"/>
</dbReference>
<dbReference type="SMART" id="SM01382">
    <property type="entry name" value="Ribosomal_L2_C"/>
    <property type="match status" value="1"/>
</dbReference>
<dbReference type="SUPFAM" id="SSF50249">
    <property type="entry name" value="Nucleic acid-binding proteins"/>
    <property type="match status" value="1"/>
</dbReference>
<dbReference type="SUPFAM" id="SSF50104">
    <property type="entry name" value="Translation proteins SH3-like domain"/>
    <property type="match status" value="1"/>
</dbReference>
<reference key="1">
    <citation type="journal article" date="2008" name="Proc. Natl. Acad. Sci. U.S.A.">
        <title>A korarchaeal genome reveals new insights into the evolution of the Archaea.</title>
        <authorList>
            <person name="Elkins J.G."/>
            <person name="Podar M."/>
            <person name="Graham D.E."/>
            <person name="Makarova K.S."/>
            <person name="Wolf Y."/>
            <person name="Randau L."/>
            <person name="Hedlund B.P."/>
            <person name="Brochier-Armanet C."/>
            <person name="Kunin V."/>
            <person name="Anderson I."/>
            <person name="Lapidus A."/>
            <person name="Goltsman E."/>
            <person name="Barry K."/>
            <person name="Koonin E.V."/>
            <person name="Hugenholtz P."/>
            <person name="Kyrpides N."/>
            <person name="Wanner G."/>
            <person name="Richardson P."/>
            <person name="Keller M."/>
            <person name="Stetter K.O."/>
        </authorList>
    </citation>
    <scope>NUCLEOTIDE SEQUENCE [LARGE SCALE GENOMIC DNA]</scope>
    <source>
        <strain>OPF8</strain>
    </source>
</reference>
<protein>
    <recommendedName>
        <fullName evidence="1">Large ribosomal subunit protein uL2</fullName>
    </recommendedName>
    <alternativeName>
        <fullName evidence="3">50S ribosomal protein L2</fullName>
    </alternativeName>
</protein>
<gene>
    <name evidence="1" type="primary">rpl2</name>
    <name type="ordered locus">Kcr_1490</name>
</gene>
<proteinExistence type="inferred from homology"/>
<keyword id="KW-1185">Reference proteome</keyword>
<keyword id="KW-0687">Ribonucleoprotein</keyword>
<keyword id="KW-0689">Ribosomal protein</keyword>
<keyword id="KW-0694">RNA-binding</keyword>
<keyword id="KW-0699">rRNA-binding</keyword>
<evidence type="ECO:0000255" key="1">
    <source>
        <dbReference type="HAMAP-Rule" id="MF_01320"/>
    </source>
</evidence>
<evidence type="ECO:0000256" key="2">
    <source>
        <dbReference type="SAM" id="MobiDB-lite"/>
    </source>
</evidence>
<evidence type="ECO:0000305" key="3"/>
<organism>
    <name type="scientific">Korarchaeum cryptofilum (strain OPF8)</name>
    <dbReference type="NCBI Taxonomy" id="374847"/>
    <lineage>
        <taxon>Archaea</taxon>
        <taxon>Thermoproteota</taxon>
        <taxon>Candidatus Korarchaeia</taxon>
        <taxon>Candidatus Korarchaeales</taxon>
        <taxon>Candidatus Korarchaeaceae</taxon>
        <taxon>Candidatus Korarchaeum</taxon>
    </lineage>
</organism>
<sequence>MGKRILVQRRGRGGIQFRSKDHLKIAPARYPQDGMDNLMRGVIKEILHEPGRHTPISLVELENGQEFYYIPPEGVYEGQEIQIGKGAEVKTGNVLPLSEIPDGSLVCNVEIRPGDGGKIARRSGTYAIVFSHEGDKVILRLPSRKEKLVDARCRATIGVVAGSGRIEKPFMKAGIKYYHERTHPKRWPVVRGVAMNPVSHPHGGGSHKRPGKPTTVARTAPPGQKVGHIAARKTGRAKRRAATKR</sequence>
<accession>B1L707</accession>
<name>RL2_KORCO</name>
<comment type="function">
    <text evidence="1">One of the primary rRNA binding proteins. Required for association of the 30S and 50S subunits to form the 70S ribosome, for tRNA binding and peptide bond formation. It has been suggested to have peptidyltransferase activity; this is somewhat controversial. Makes several contacts with the 16S rRNA in the 70S ribosome.</text>
</comment>
<comment type="subunit">
    <text evidence="1">Part of the 50S ribosomal subunit. Forms a bridge to the 30S subunit in the 70S ribosome.</text>
</comment>
<comment type="similarity">
    <text evidence="1">Belongs to the universal ribosomal protein uL2 family.</text>
</comment>
<feature type="chain" id="PRO_1000141568" description="Large ribosomal subunit protein uL2">
    <location>
        <begin position="1"/>
        <end position="245"/>
    </location>
</feature>
<feature type="region of interest" description="Disordered" evidence="2">
    <location>
        <begin position="198"/>
        <end position="245"/>
    </location>
</feature>
<feature type="compositionally biased region" description="Basic residues" evidence="2">
    <location>
        <begin position="230"/>
        <end position="245"/>
    </location>
</feature>